<protein>
    <recommendedName>
        <fullName evidence="1">Large ribosomal subunit protein uL24</fullName>
    </recommendedName>
    <alternativeName>
        <fullName evidence="2">50S ribosomal protein L24</fullName>
    </alternativeName>
</protein>
<comment type="function">
    <text evidence="1">One of two assembly initiator proteins, it binds directly to the 5'-end of the 23S rRNA, where it nucleates assembly of the 50S subunit.</text>
</comment>
<comment type="function">
    <text evidence="1">One of the proteins that surrounds the polypeptide exit tunnel on the outside of the subunit.</text>
</comment>
<comment type="subunit">
    <text evidence="1">Part of the 50S ribosomal subunit.</text>
</comment>
<comment type="similarity">
    <text evidence="1">Belongs to the universal ribosomal protein uL24 family.</text>
</comment>
<gene>
    <name evidence="1" type="primary">rplX</name>
    <name type="ordered locus">APP7_1856</name>
</gene>
<evidence type="ECO:0000255" key="1">
    <source>
        <dbReference type="HAMAP-Rule" id="MF_01326"/>
    </source>
</evidence>
<evidence type="ECO:0000305" key="2"/>
<keyword id="KW-0687">Ribonucleoprotein</keyword>
<keyword id="KW-0689">Ribosomal protein</keyword>
<keyword id="KW-0694">RNA-binding</keyword>
<keyword id="KW-0699">rRNA-binding</keyword>
<name>RL24_ACTP7</name>
<reference key="1">
    <citation type="submission" date="2008-06" db="EMBL/GenBank/DDBJ databases">
        <title>Genome and proteome analysis of A. pleuropneumoniae serotype 7.</title>
        <authorList>
            <person name="Linke B."/>
            <person name="Buettner F."/>
            <person name="Martinez-Arias R."/>
            <person name="Goesmann A."/>
            <person name="Baltes N."/>
            <person name="Tegetmeyer H."/>
            <person name="Singh M."/>
            <person name="Gerlach G.F."/>
        </authorList>
    </citation>
    <scope>NUCLEOTIDE SEQUENCE [LARGE SCALE GENOMIC DNA]</scope>
    <source>
        <strain>AP76</strain>
    </source>
</reference>
<accession>B3GZ22</accession>
<organism>
    <name type="scientific">Actinobacillus pleuropneumoniae serotype 7 (strain AP76)</name>
    <dbReference type="NCBI Taxonomy" id="537457"/>
    <lineage>
        <taxon>Bacteria</taxon>
        <taxon>Pseudomonadati</taxon>
        <taxon>Pseudomonadota</taxon>
        <taxon>Gammaproteobacteria</taxon>
        <taxon>Pasteurellales</taxon>
        <taxon>Pasteurellaceae</taxon>
        <taxon>Actinobacillus</taxon>
    </lineage>
</organism>
<feature type="chain" id="PRO_1000141953" description="Large ribosomal subunit protein uL24">
    <location>
        <begin position="1"/>
        <end position="103"/>
    </location>
</feature>
<proteinExistence type="inferred from homology"/>
<sequence length="103" mass="11239">MAAKIRQNDEVIVLTGKDKGKRGKVTQVLPNGKVIVEGVKIITKHEKPVPALGKAGGLVKKEAAIDASNIAIFNPKTNKADRVGFRFEDGKKVRFFKSNNEII</sequence>
<dbReference type="EMBL" id="CP001091">
    <property type="protein sequence ID" value="ACE62508.1"/>
    <property type="molecule type" value="Genomic_DNA"/>
</dbReference>
<dbReference type="RefSeq" id="WP_005599300.1">
    <property type="nucleotide sequence ID" value="NC_010939.1"/>
</dbReference>
<dbReference type="SMR" id="B3GZ22"/>
<dbReference type="GeneID" id="48600063"/>
<dbReference type="KEGG" id="apa:APP7_1856"/>
<dbReference type="HOGENOM" id="CLU_093315_2_2_6"/>
<dbReference type="Proteomes" id="UP000001226">
    <property type="component" value="Chromosome"/>
</dbReference>
<dbReference type="GO" id="GO:1990904">
    <property type="term" value="C:ribonucleoprotein complex"/>
    <property type="evidence" value="ECO:0007669"/>
    <property type="project" value="UniProtKB-KW"/>
</dbReference>
<dbReference type="GO" id="GO:0005840">
    <property type="term" value="C:ribosome"/>
    <property type="evidence" value="ECO:0007669"/>
    <property type="project" value="UniProtKB-KW"/>
</dbReference>
<dbReference type="GO" id="GO:0019843">
    <property type="term" value="F:rRNA binding"/>
    <property type="evidence" value="ECO:0007669"/>
    <property type="project" value="UniProtKB-UniRule"/>
</dbReference>
<dbReference type="GO" id="GO:0003735">
    <property type="term" value="F:structural constituent of ribosome"/>
    <property type="evidence" value="ECO:0007669"/>
    <property type="project" value="InterPro"/>
</dbReference>
<dbReference type="GO" id="GO:0006412">
    <property type="term" value="P:translation"/>
    <property type="evidence" value="ECO:0007669"/>
    <property type="project" value="UniProtKB-UniRule"/>
</dbReference>
<dbReference type="CDD" id="cd06089">
    <property type="entry name" value="KOW_RPL26"/>
    <property type="match status" value="1"/>
</dbReference>
<dbReference type="FunFam" id="2.30.30.30:FF:000004">
    <property type="entry name" value="50S ribosomal protein L24"/>
    <property type="match status" value="1"/>
</dbReference>
<dbReference type="Gene3D" id="2.30.30.30">
    <property type="match status" value="1"/>
</dbReference>
<dbReference type="HAMAP" id="MF_01326_B">
    <property type="entry name" value="Ribosomal_uL24_B"/>
    <property type="match status" value="1"/>
</dbReference>
<dbReference type="InterPro" id="IPR005824">
    <property type="entry name" value="KOW"/>
</dbReference>
<dbReference type="InterPro" id="IPR014722">
    <property type="entry name" value="Rib_uL2_dom2"/>
</dbReference>
<dbReference type="InterPro" id="IPR003256">
    <property type="entry name" value="Ribosomal_uL24"/>
</dbReference>
<dbReference type="InterPro" id="IPR005825">
    <property type="entry name" value="Ribosomal_uL24_CS"/>
</dbReference>
<dbReference type="InterPro" id="IPR041988">
    <property type="entry name" value="Ribosomal_uL24_KOW"/>
</dbReference>
<dbReference type="InterPro" id="IPR008991">
    <property type="entry name" value="Translation_prot_SH3-like_sf"/>
</dbReference>
<dbReference type="NCBIfam" id="TIGR01079">
    <property type="entry name" value="rplX_bact"/>
    <property type="match status" value="1"/>
</dbReference>
<dbReference type="PANTHER" id="PTHR12903">
    <property type="entry name" value="MITOCHONDRIAL RIBOSOMAL PROTEIN L24"/>
    <property type="match status" value="1"/>
</dbReference>
<dbReference type="Pfam" id="PF00467">
    <property type="entry name" value="KOW"/>
    <property type="match status" value="1"/>
</dbReference>
<dbReference type="Pfam" id="PF17136">
    <property type="entry name" value="ribosomal_L24"/>
    <property type="match status" value="1"/>
</dbReference>
<dbReference type="SMART" id="SM00739">
    <property type="entry name" value="KOW"/>
    <property type="match status" value="1"/>
</dbReference>
<dbReference type="SUPFAM" id="SSF50104">
    <property type="entry name" value="Translation proteins SH3-like domain"/>
    <property type="match status" value="1"/>
</dbReference>
<dbReference type="PROSITE" id="PS01108">
    <property type="entry name" value="RIBOSOMAL_L24"/>
    <property type="match status" value="1"/>
</dbReference>